<evidence type="ECO:0000255" key="1">
    <source>
        <dbReference type="HAMAP-Rule" id="MF_00530"/>
    </source>
</evidence>
<proteinExistence type="inferred from homology"/>
<dbReference type="EMBL" id="CP000698">
    <property type="protein sequence ID" value="ABQ28407.1"/>
    <property type="molecule type" value="Genomic_DNA"/>
</dbReference>
<dbReference type="RefSeq" id="WP_011941037.1">
    <property type="nucleotide sequence ID" value="NC_009483.1"/>
</dbReference>
<dbReference type="SMR" id="A5G9D9"/>
<dbReference type="STRING" id="351605.Gura_4264"/>
<dbReference type="KEGG" id="gur:Gura_4264"/>
<dbReference type="HOGENOM" id="CLU_084338_1_3_7"/>
<dbReference type="OrthoDB" id="9799969at2"/>
<dbReference type="Proteomes" id="UP000006695">
    <property type="component" value="Chromosome"/>
</dbReference>
<dbReference type="GO" id="GO:0005886">
    <property type="term" value="C:plasma membrane"/>
    <property type="evidence" value="ECO:0007669"/>
    <property type="project" value="UniProtKB-SubCell"/>
</dbReference>
<dbReference type="GO" id="GO:0045259">
    <property type="term" value="C:proton-transporting ATP synthase complex"/>
    <property type="evidence" value="ECO:0007669"/>
    <property type="project" value="UniProtKB-KW"/>
</dbReference>
<dbReference type="GO" id="GO:0005524">
    <property type="term" value="F:ATP binding"/>
    <property type="evidence" value="ECO:0007669"/>
    <property type="project" value="UniProtKB-UniRule"/>
</dbReference>
<dbReference type="GO" id="GO:0046933">
    <property type="term" value="F:proton-transporting ATP synthase activity, rotational mechanism"/>
    <property type="evidence" value="ECO:0007669"/>
    <property type="project" value="UniProtKB-UniRule"/>
</dbReference>
<dbReference type="CDD" id="cd12152">
    <property type="entry name" value="F1-ATPase_delta"/>
    <property type="match status" value="1"/>
</dbReference>
<dbReference type="FunFam" id="2.60.15.10:FF:000001">
    <property type="entry name" value="ATP synthase epsilon chain"/>
    <property type="match status" value="1"/>
</dbReference>
<dbReference type="Gene3D" id="1.20.5.440">
    <property type="entry name" value="ATP synthase delta/epsilon subunit, C-terminal domain"/>
    <property type="match status" value="1"/>
</dbReference>
<dbReference type="Gene3D" id="2.60.15.10">
    <property type="entry name" value="F0F1 ATP synthase delta/epsilon subunit, N-terminal"/>
    <property type="match status" value="1"/>
</dbReference>
<dbReference type="HAMAP" id="MF_00530">
    <property type="entry name" value="ATP_synth_epsil_bac"/>
    <property type="match status" value="1"/>
</dbReference>
<dbReference type="InterPro" id="IPR001469">
    <property type="entry name" value="ATP_synth_F1_dsu/esu"/>
</dbReference>
<dbReference type="InterPro" id="IPR020546">
    <property type="entry name" value="ATP_synth_F1_dsu/esu_N"/>
</dbReference>
<dbReference type="InterPro" id="IPR020547">
    <property type="entry name" value="ATP_synth_F1_esu_C"/>
</dbReference>
<dbReference type="InterPro" id="IPR036771">
    <property type="entry name" value="ATPsynth_dsu/esu_N"/>
</dbReference>
<dbReference type="NCBIfam" id="TIGR01216">
    <property type="entry name" value="ATP_synt_epsi"/>
    <property type="match status" value="1"/>
</dbReference>
<dbReference type="NCBIfam" id="NF009980">
    <property type="entry name" value="PRK13446.1"/>
    <property type="match status" value="1"/>
</dbReference>
<dbReference type="PANTHER" id="PTHR13822">
    <property type="entry name" value="ATP SYNTHASE DELTA/EPSILON CHAIN"/>
    <property type="match status" value="1"/>
</dbReference>
<dbReference type="PANTHER" id="PTHR13822:SF10">
    <property type="entry name" value="ATP SYNTHASE EPSILON CHAIN, CHLOROPLASTIC"/>
    <property type="match status" value="1"/>
</dbReference>
<dbReference type="Pfam" id="PF00401">
    <property type="entry name" value="ATP-synt_DE"/>
    <property type="match status" value="1"/>
</dbReference>
<dbReference type="Pfam" id="PF02823">
    <property type="entry name" value="ATP-synt_DE_N"/>
    <property type="match status" value="1"/>
</dbReference>
<dbReference type="SUPFAM" id="SSF51344">
    <property type="entry name" value="Epsilon subunit of F1F0-ATP synthase N-terminal domain"/>
    <property type="match status" value="1"/>
</dbReference>
<name>ATPE_GEOUR</name>
<feature type="chain" id="PRO_1000081733" description="ATP synthase epsilon chain">
    <location>
        <begin position="1"/>
        <end position="138"/>
    </location>
</feature>
<reference key="1">
    <citation type="submission" date="2007-05" db="EMBL/GenBank/DDBJ databases">
        <title>Complete sequence of Geobacter uraniireducens Rf4.</title>
        <authorList>
            <consortium name="US DOE Joint Genome Institute"/>
            <person name="Copeland A."/>
            <person name="Lucas S."/>
            <person name="Lapidus A."/>
            <person name="Barry K."/>
            <person name="Detter J.C."/>
            <person name="Glavina del Rio T."/>
            <person name="Hammon N."/>
            <person name="Israni S."/>
            <person name="Dalin E."/>
            <person name="Tice H."/>
            <person name="Pitluck S."/>
            <person name="Chertkov O."/>
            <person name="Brettin T."/>
            <person name="Bruce D."/>
            <person name="Han C."/>
            <person name="Schmutz J."/>
            <person name="Larimer F."/>
            <person name="Land M."/>
            <person name="Hauser L."/>
            <person name="Kyrpides N."/>
            <person name="Mikhailova N."/>
            <person name="Shelobolina E."/>
            <person name="Aklujkar M."/>
            <person name="Lovley D."/>
            <person name="Richardson P."/>
        </authorList>
    </citation>
    <scope>NUCLEOTIDE SEQUENCE [LARGE SCALE GENOMIC DNA]</scope>
    <source>
        <strain>ATCC BAA-1134 / JCM 13001 / Rf4</strain>
    </source>
</reference>
<comment type="function">
    <text evidence="1">Produces ATP from ADP in the presence of a proton gradient across the membrane.</text>
</comment>
<comment type="subunit">
    <text evidence="1">F-type ATPases have 2 components, CF(1) - the catalytic core - and CF(0) - the membrane proton channel. CF(1) has five subunits: alpha(3), beta(3), gamma(1), delta(1), epsilon(1). CF(0) has three main subunits: a, b and c.</text>
</comment>
<comment type="subcellular location">
    <subcellularLocation>
        <location evidence="1">Cell inner membrane</location>
        <topology evidence="1">Peripheral membrane protein</topology>
    </subcellularLocation>
</comment>
<comment type="similarity">
    <text evidence="1">Belongs to the ATPase epsilon chain family.</text>
</comment>
<protein>
    <recommendedName>
        <fullName evidence="1">ATP synthase epsilon chain</fullName>
    </recommendedName>
    <alternativeName>
        <fullName evidence="1">ATP synthase F1 sector epsilon subunit</fullName>
    </alternativeName>
    <alternativeName>
        <fullName evidence="1">F-ATPase epsilon subunit</fullName>
    </alternativeName>
</protein>
<keyword id="KW-0066">ATP synthesis</keyword>
<keyword id="KW-0997">Cell inner membrane</keyword>
<keyword id="KW-1003">Cell membrane</keyword>
<keyword id="KW-0139">CF(1)</keyword>
<keyword id="KW-0375">Hydrogen ion transport</keyword>
<keyword id="KW-0406">Ion transport</keyword>
<keyword id="KW-0472">Membrane</keyword>
<keyword id="KW-1185">Reference proteome</keyword>
<keyword id="KW-0813">Transport</keyword>
<organism>
    <name type="scientific">Geotalea uraniireducens (strain Rf4)</name>
    <name type="common">Geobacter uraniireducens</name>
    <dbReference type="NCBI Taxonomy" id="351605"/>
    <lineage>
        <taxon>Bacteria</taxon>
        <taxon>Pseudomonadati</taxon>
        <taxon>Thermodesulfobacteriota</taxon>
        <taxon>Desulfuromonadia</taxon>
        <taxon>Geobacterales</taxon>
        <taxon>Geobacteraceae</taxon>
        <taxon>Geotalea</taxon>
    </lineage>
</organism>
<accession>A5G9D9</accession>
<gene>
    <name evidence="1" type="primary">atpC</name>
    <name type="ordered locus">Gura_4264</name>
</gene>
<sequence length="138" mass="15246">MAEKLKVELVTPYKRVLSEEVDEITATGALGEFGVLPGHAPFLTSLKIGELAYKKDGVQQHMALNWGYFEVEGDKVTVLVETAERADEIDLERAKAALGRAEEALKKLSPEDKSFRIYEAALERAAIRMQVAAKAARK</sequence>